<keyword id="KW-0256">Endoplasmic reticulum</keyword>
<keyword id="KW-0967">Endosome</keyword>
<keyword id="KW-0333">Golgi apparatus</keyword>
<keyword id="KW-0460">Magnesium</keyword>
<keyword id="KW-0472">Membrane</keyword>
<keyword id="KW-0597">Phosphoprotein</keyword>
<keyword id="KW-1185">Reference proteome</keyword>
<keyword id="KW-0812">Transmembrane</keyword>
<keyword id="KW-1133">Transmembrane helix</keyword>
<keyword id="KW-0813">Transport</keyword>
<dbReference type="EMBL" id="EU069461">
    <property type="protein sequence ID" value="ABS87351.1"/>
    <property type="molecule type" value="mRNA"/>
</dbReference>
<dbReference type="EMBL" id="AK036253">
    <property type="protein sequence ID" value="BAC29362.1"/>
    <property type="molecule type" value="mRNA"/>
</dbReference>
<dbReference type="EMBL" id="AK043524">
    <property type="protein sequence ID" value="BAC31567.1"/>
    <property type="molecule type" value="mRNA"/>
</dbReference>
<dbReference type="EMBL" id="AK049689">
    <property type="protein sequence ID" value="BAC33874.1"/>
    <property type="molecule type" value="mRNA"/>
</dbReference>
<dbReference type="EMBL" id="BC032271">
    <property type="protein sequence ID" value="AAH32271.1"/>
    <property type="molecule type" value="mRNA"/>
</dbReference>
<dbReference type="CCDS" id="CCDS30147.1"/>
<dbReference type="RefSeq" id="NP_666346.1">
    <property type="nucleotide sequence ID" value="NM_146234.4"/>
</dbReference>
<dbReference type="SMR" id="Q8K273"/>
<dbReference type="BioGRID" id="231797">
    <property type="interactions" value="4"/>
</dbReference>
<dbReference type="ComplexPortal" id="CPX-5882">
    <property type="entry name" value="Endoplasmic reticulum membrane complex, EMC8 variant"/>
</dbReference>
<dbReference type="ComplexPortal" id="CPX-5883">
    <property type="entry name" value="Endoplasmic reticulum membrane complex, EMC9 variant"/>
</dbReference>
<dbReference type="FunCoup" id="Q8K273">
    <property type="interactions" value="1684"/>
</dbReference>
<dbReference type="IntAct" id="Q8K273">
    <property type="interactions" value="1"/>
</dbReference>
<dbReference type="MINT" id="Q8K273"/>
<dbReference type="STRING" id="10090.ENSMUSP00000051621"/>
<dbReference type="TCDB" id="1.A.67.1.1">
    <property type="family name" value="the membrane mg(2+) transporter (mmgt) family"/>
</dbReference>
<dbReference type="iPTMnet" id="Q8K273"/>
<dbReference type="PhosphoSitePlus" id="Q8K273"/>
<dbReference type="jPOST" id="Q8K273"/>
<dbReference type="PaxDb" id="10090-ENSMUSP00000051621"/>
<dbReference type="PeptideAtlas" id="Q8K273"/>
<dbReference type="ProteomicsDB" id="291368"/>
<dbReference type="Pumba" id="Q8K273"/>
<dbReference type="Antibodypedia" id="51536">
    <property type="antibodies" value="125 antibodies from 16 providers"/>
</dbReference>
<dbReference type="Ensembl" id="ENSMUST00000059899.3">
    <property type="protein sequence ID" value="ENSMUSP00000051621.3"/>
    <property type="gene ID" value="ENSMUSG00000061273.4"/>
</dbReference>
<dbReference type="GeneID" id="236792"/>
<dbReference type="KEGG" id="mmu:236792"/>
<dbReference type="UCSC" id="uc009tgj.1">
    <property type="organism name" value="mouse"/>
</dbReference>
<dbReference type="AGR" id="MGI:2384305"/>
<dbReference type="CTD" id="93380"/>
<dbReference type="MGI" id="MGI:2384305">
    <property type="gene designation" value="Mmgt1"/>
</dbReference>
<dbReference type="VEuPathDB" id="HostDB:ENSMUSG00000061273"/>
<dbReference type="eggNOG" id="KOG3918">
    <property type="taxonomic scope" value="Eukaryota"/>
</dbReference>
<dbReference type="GeneTree" id="ENSGT00510000047104"/>
<dbReference type="HOGENOM" id="CLU_122437_1_0_1"/>
<dbReference type="InParanoid" id="Q8K273"/>
<dbReference type="OMA" id="CYGIVHL"/>
<dbReference type="OrthoDB" id="44756at2759"/>
<dbReference type="PhylomeDB" id="Q8K273"/>
<dbReference type="TreeFam" id="TF323267"/>
<dbReference type="BioGRID-ORCS" id="236792">
    <property type="hits" value="0 hits in 76 CRISPR screens"/>
</dbReference>
<dbReference type="ChiTaRS" id="Mmgt1">
    <property type="organism name" value="mouse"/>
</dbReference>
<dbReference type="PRO" id="PR:Q8K273"/>
<dbReference type="Proteomes" id="UP000000589">
    <property type="component" value="Chromosome X"/>
</dbReference>
<dbReference type="RNAct" id="Q8K273">
    <property type="molecule type" value="protein"/>
</dbReference>
<dbReference type="Bgee" id="ENSMUSG00000061273">
    <property type="expression patterns" value="Expressed in manus and 238 other cell types or tissues"/>
</dbReference>
<dbReference type="GO" id="GO:0005737">
    <property type="term" value="C:cytoplasm"/>
    <property type="evidence" value="ECO:0000314"/>
    <property type="project" value="MGI"/>
</dbReference>
<dbReference type="GO" id="GO:0005769">
    <property type="term" value="C:early endosome"/>
    <property type="evidence" value="ECO:0000314"/>
    <property type="project" value="UniProtKB"/>
</dbReference>
<dbReference type="GO" id="GO:0031901">
    <property type="term" value="C:early endosome membrane"/>
    <property type="evidence" value="ECO:0007669"/>
    <property type="project" value="UniProtKB-SubCell"/>
</dbReference>
<dbReference type="GO" id="GO:0072546">
    <property type="term" value="C:EMC complex"/>
    <property type="evidence" value="ECO:0000250"/>
    <property type="project" value="UniProtKB"/>
</dbReference>
<dbReference type="GO" id="GO:0005789">
    <property type="term" value="C:endoplasmic reticulum membrane"/>
    <property type="evidence" value="ECO:0000250"/>
    <property type="project" value="UniProtKB"/>
</dbReference>
<dbReference type="GO" id="GO:0005794">
    <property type="term" value="C:Golgi apparatus"/>
    <property type="evidence" value="ECO:0000314"/>
    <property type="project" value="UniProtKB"/>
</dbReference>
<dbReference type="GO" id="GO:0000139">
    <property type="term" value="C:Golgi membrane"/>
    <property type="evidence" value="ECO:0000304"/>
    <property type="project" value="Reactome"/>
</dbReference>
<dbReference type="GO" id="GO:0016020">
    <property type="term" value="C:membrane"/>
    <property type="evidence" value="ECO:0000250"/>
    <property type="project" value="UniProtKB"/>
</dbReference>
<dbReference type="GO" id="GO:0005886">
    <property type="term" value="C:plasma membrane"/>
    <property type="evidence" value="ECO:0000314"/>
    <property type="project" value="MGI"/>
</dbReference>
<dbReference type="GO" id="GO:0015087">
    <property type="term" value="F:cobalt ion transmembrane transporter activity"/>
    <property type="evidence" value="ECO:0000314"/>
    <property type="project" value="MGI"/>
</dbReference>
<dbReference type="GO" id="GO:0015093">
    <property type="term" value="F:ferrous iron transmembrane transporter activity"/>
    <property type="evidence" value="ECO:0000314"/>
    <property type="project" value="MGI"/>
</dbReference>
<dbReference type="GO" id="GO:0022890">
    <property type="term" value="F:inorganic cation transmembrane transporter activity"/>
    <property type="evidence" value="ECO:0000314"/>
    <property type="project" value="MGI"/>
</dbReference>
<dbReference type="GO" id="GO:0015095">
    <property type="term" value="F:magnesium ion transmembrane transporter activity"/>
    <property type="evidence" value="ECO:0000314"/>
    <property type="project" value="UniProtKB"/>
</dbReference>
<dbReference type="GO" id="GO:0032977">
    <property type="term" value="F:membrane insertase activity"/>
    <property type="evidence" value="ECO:0007669"/>
    <property type="project" value="Ensembl"/>
</dbReference>
<dbReference type="GO" id="GO:0006824">
    <property type="term" value="P:cobalt ion transport"/>
    <property type="evidence" value="ECO:0000314"/>
    <property type="project" value="MGI"/>
</dbReference>
<dbReference type="GO" id="GO:0006825">
    <property type="term" value="P:copper ion transport"/>
    <property type="evidence" value="ECO:0000314"/>
    <property type="project" value="MGI"/>
</dbReference>
<dbReference type="GO" id="GO:0006826">
    <property type="term" value="P:iron ion transport"/>
    <property type="evidence" value="ECO:0000314"/>
    <property type="project" value="MGI"/>
</dbReference>
<dbReference type="GO" id="GO:0015693">
    <property type="term" value="P:magnesium ion transport"/>
    <property type="evidence" value="ECO:0000314"/>
    <property type="project" value="UniProtKB"/>
</dbReference>
<dbReference type="GO" id="GO:0006812">
    <property type="term" value="P:monoatomic cation transport"/>
    <property type="evidence" value="ECO:0000314"/>
    <property type="project" value="MGI"/>
</dbReference>
<dbReference type="GO" id="GO:0045050">
    <property type="term" value="P:protein insertion into ER membrane by stop-transfer membrane-anchor sequence"/>
    <property type="evidence" value="ECO:0000250"/>
    <property type="project" value="UniProtKB"/>
</dbReference>
<dbReference type="GO" id="GO:0071816">
    <property type="term" value="P:tail-anchored membrane protein insertion into ER membrane"/>
    <property type="evidence" value="ECO:0000250"/>
    <property type="project" value="UniProtKB"/>
</dbReference>
<dbReference type="InterPro" id="IPR018937">
    <property type="entry name" value="MMgT"/>
</dbReference>
<dbReference type="PANTHER" id="PTHR21181">
    <property type="match status" value="1"/>
</dbReference>
<dbReference type="PANTHER" id="PTHR21181:SF15">
    <property type="entry name" value="ER MEMBRANE PROTEIN COMPLEX SUBUNIT 5"/>
    <property type="match status" value="1"/>
</dbReference>
<dbReference type="Pfam" id="PF10270">
    <property type="entry name" value="MMgT"/>
    <property type="match status" value="1"/>
</dbReference>
<sequence>MAPSLWKGLVGVGLFALAHAAFSAAQHRSYMRLTEKEDESLPIDIVLQTLLAFAVTCYGIVHIAGEFKDMDATSELKNKTFDTLRNHPSFYVFNHRGRVLFRPSDATNSSNLDALSSNTSLKLRKFDSLRR</sequence>
<comment type="function">
    <text evidence="1 2 5">Part of the endoplasmic reticulum membrane protein complex (EMC) that enables the energy-independent insertion into endoplasmic reticulum membranes of newly synthesized membrane proteins. Preferentially accommodates proteins with transmembrane domains that are weakly hydrophobic or contain destabilizing features such as charged and aromatic residues. Involved in the cotranslational insertion of multi-pass membrane proteins in which stop-transfer membrane-anchor sequences become ER membrane spanning helices. It is also required for the post-translational insertion of tail-anchored/TA proteins in endoplasmic reticulum membranes. By mediating the proper cotranslational insertion of N-terminal transmembrane domains in an N-exo topology, with translocated N-terminus in the lumen of the ER, controls the topology of multi-pass membrane proteins like the G protein-coupled receptors (By similarity). By regulating the insertion of various proteins in membranes, it is indirectly involved in many cellular processes (Probable). May be involved Mg(2+) transport (PubMed:18057121).</text>
</comment>
<comment type="subunit">
    <text evidence="1">Component of the ER membrane protein complex (EMC).</text>
</comment>
<comment type="subcellular location">
    <subcellularLocation>
        <location evidence="1">Endoplasmic reticulum membrane</location>
        <topology evidence="1">Multi-pass membrane protein</topology>
    </subcellularLocation>
    <subcellularLocation>
        <location evidence="2">Golgi apparatus membrane</location>
        <topology evidence="1">Multi-pass membrane protein</topology>
    </subcellularLocation>
    <subcellularLocation>
        <location evidence="2">Early endosome membrane</location>
        <topology evidence="1">Multi-pass membrane protein</topology>
    </subcellularLocation>
</comment>
<comment type="tissue specificity">
    <text evidence="2">Abundant in heart muscle and kidney with lower levels in liver and brain and very little expression in intestine or colon. In kidney, highest levels in distal convoluted tubule.</text>
</comment>
<comment type="induction">
    <text evidence="2">Up-regulated by low extracellular Mg(2+).</text>
</comment>
<comment type="similarity">
    <text evidence="4">Belongs to the membrane magnesium transporter (TC 1.A.67) family.</text>
</comment>
<evidence type="ECO:0000250" key="1">
    <source>
        <dbReference type="UniProtKB" id="Q8N4V1"/>
    </source>
</evidence>
<evidence type="ECO:0000269" key="2">
    <source>
    </source>
</evidence>
<evidence type="ECO:0000303" key="3">
    <source>
    </source>
</evidence>
<evidence type="ECO:0000305" key="4"/>
<evidence type="ECO:0000305" key="5">
    <source>
    </source>
</evidence>
<evidence type="ECO:0000312" key="6">
    <source>
        <dbReference type="MGI" id="MGI:2384305"/>
    </source>
</evidence>
<evidence type="ECO:0007744" key="7">
    <source>
    </source>
</evidence>
<feature type="chain" id="PRO_0000286436" description="ER membrane protein complex subunit 5">
    <location>
        <begin position="1"/>
        <end position="131"/>
    </location>
</feature>
<feature type="topological domain" description="Cytoplasmic" evidence="1">
    <location>
        <begin position="1"/>
        <end position="3"/>
    </location>
</feature>
<feature type="transmembrane region" description="Helical" evidence="1">
    <location>
        <begin position="4"/>
        <end position="22"/>
    </location>
</feature>
<feature type="topological domain" description="Lumenal" evidence="1">
    <location>
        <begin position="23"/>
        <end position="43"/>
    </location>
</feature>
<feature type="transmembrane region" description="Helical" evidence="1">
    <location>
        <begin position="44"/>
        <end position="63"/>
    </location>
</feature>
<feature type="topological domain" description="Cytoplasmic" evidence="1">
    <location>
        <begin position="64"/>
        <end position="131"/>
    </location>
</feature>
<feature type="modified residue" description="Phosphoserine" evidence="7">
    <location>
        <position position="120"/>
    </location>
</feature>
<name>EMC5_MOUSE</name>
<reference key="1">
    <citation type="journal article" date="2008" name="Am. J. Physiol.">
        <title>Identification and characterization of a novel family of membrane magnesium transporters, MMgT1 and MMgT2.</title>
        <authorList>
            <person name="Goytain A."/>
            <person name="Quamme G.A."/>
        </authorList>
    </citation>
    <scope>NUCLEOTIDE SEQUENCE [MRNA]</scope>
    <scope>FUNCTION</scope>
    <scope>SUBCELLULAR LOCATION</scope>
    <scope>TISSUE SPECIFICITY</scope>
    <scope>INDUCTION</scope>
</reference>
<reference key="2">
    <citation type="journal article" date="2005" name="Science">
        <title>The transcriptional landscape of the mammalian genome.</title>
        <authorList>
            <person name="Carninci P."/>
            <person name="Kasukawa T."/>
            <person name="Katayama S."/>
            <person name="Gough J."/>
            <person name="Frith M.C."/>
            <person name="Maeda N."/>
            <person name="Oyama R."/>
            <person name="Ravasi T."/>
            <person name="Lenhard B."/>
            <person name="Wells C."/>
            <person name="Kodzius R."/>
            <person name="Shimokawa K."/>
            <person name="Bajic V.B."/>
            <person name="Brenner S.E."/>
            <person name="Batalov S."/>
            <person name="Forrest A.R."/>
            <person name="Zavolan M."/>
            <person name="Davis M.J."/>
            <person name="Wilming L.G."/>
            <person name="Aidinis V."/>
            <person name="Allen J.E."/>
            <person name="Ambesi-Impiombato A."/>
            <person name="Apweiler R."/>
            <person name="Aturaliya R.N."/>
            <person name="Bailey T.L."/>
            <person name="Bansal M."/>
            <person name="Baxter L."/>
            <person name="Beisel K.W."/>
            <person name="Bersano T."/>
            <person name="Bono H."/>
            <person name="Chalk A.M."/>
            <person name="Chiu K.P."/>
            <person name="Choudhary V."/>
            <person name="Christoffels A."/>
            <person name="Clutterbuck D.R."/>
            <person name="Crowe M.L."/>
            <person name="Dalla E."/>
            <person name="Dalrymple B.P."/>
            <person name="de Bono B."/>
            <person name="Della Gatta G."/>
            <person name="di Bernardo D."/>
            <person name="Down T."/>
            <person name="Engstrom P."/>
            <person name="Fagiolini M."/>
            <person name="Faulkner G."/>
            <person name="Fletcher C.F."/>
            <person name="Fukushima T."/>
            <person name="Furuno M."/>
            <person name="Futaki S."/>
            <person name="Gariboldi M."/>
            <person name="Georgii-Hemming P."/>
            <person name="Gingeras T.R."/>
            <person name="Gojobori T."/>
            <person name="Green R.E."/>
            <person name="Gustincich S."/>
            <person name="Harbers M."/>
            <person name="Hayashi Y."/>
            <person name="Hensch T.K."/>
            <person name="Hirokawa N."/>
            <person name="Hill D."/>
            <person name="Huminiecki L."/>
            <person name="Iacono M."/>
            <person name="Ikeo K."/>
            <person name="Iwama A."/>
            <person name="Ishikawa T."/>
            <person name="Jakt M."/>
            <person name="Kanapin A."/>
            <person name="Katoh M."/>
            <person name="Kawasawa Y."/>
            <person name="Kelso J."/>
            <person name="Kitamura H."/>
            <person name="Kitano H."/>
            <person name="Kollias G."/>
            <person name="Krishnan S.P."/>
            <person name="Kruger A."/>
            <person name="Kummerfeld S.K."/>
            <person name="Kurochkin I.V."/>
            <person name="Lareau L.F."/>
            <person name="Lazarevic D."/>
            <person name="Lipovich L."/>
            <person name="Liu J."/>
            <person name="Liuni S."/>
            <person name="McWilliam S."/>
            <person name="Madan Babu M."/>
            <person name="Madera M."/>
            <person name="Marchionni L."/>
            <person name="Matsuda H."/>
            <person name="Matsuzawa S."/>
            <person name="Miki H."/>
            <person name="Mignone F."/>
            <person name="Miyake S."/>
            <person name="Morris K."/>
            <person name="Mottagui-Tabar S."/>
            <person name="Mulder N."/>
            <person name="Nakano N."/>
            <person name="Nakauchi H."/>
            <person name="Ng P."/>
            <person name="Nilsson R."/>
            <person name="Nishiguchi S."/>
            <person name="Nishikawa S."/>
            <person name="Nori F."/>
            <person name="Ohara O."/>
            <person name="Okazaki Y."/>
            <person name="Orlando V."/>
            <person name="Pang K.C."/>
            <person name="Pavan W.J."/>
            <person name="Pavesi G."/>
            <person name="Pesole G."/>
            <person name="Petrovsky N."/>
            <person name="Piazza S."/>
            <person name="Reed J."/>
            <person name="Reid J.F."/>
            <person name="Ring B.Z."/>
            <person name="Ringwald M."/>
            <person name="Rost B."/>
            <person name="Ruan Y."/>
            <person name="Salzberg S.L."/>
            <person name="Sandelin A."/>
            <person name="Schneider C."/>
            <person name="Schoenbach C."/>
            <person name="Sekiguchi K."/>
            <person name="Semple C.A."/>
            <person name="Seno S."/>
            <person name="Sessa L."/>
            <person name="Sheng Y."/>
            <person name="Shibata Y."/>
            <person name="Shimada H."/>
            <person name="Shimada K."/>
            <person name="Silva D."/>
            <person name="Sinclair B."/>
            <person name="Sperling S."/>
            <person name="Stupka E."/>
            <person name="Sugiura K."/>
            <person name="Sultana R."/>
            <person name="Takenaka Y."/>
            <person name="Taki K."/>
            <person name="Tammoja K."/>
            <person name="Tan S.L."/>
            <person name="Tang S."/>
            <person name="Taylor M.S."/>
            <person name="Tegner J."/>
            <person name="Teichmann S.A."/>
            <person name="Ueda H.R."/>
            <person name="van Nimwegen E."/>
            <person name="Verardo R."/>
            <person name="Wei C.L."/>
            <person name="Yagi K."/>
            <person name="Yamanishi H."/>
            <person name="Zabarovsky E."/>
            <person name="Zhu S."/>
            <person name="Zimmer A."/>
            <person name="Hide W."/>
            <person name="Bult C."/>
            <person name="Grimmond S.M."/>
            <person name="Teasdale R.D."/>
            <person name="Liu E.T."/>
            <person name="Brusic V."/>
            <person name="Quackenbush J."/>
            <person name="Wahlestedt C."/>
            <person name="Mattick J.S."/>
            <person name="Hume D.A."/>
            <person name="Kai C."/>
            <person name="Sasaki D."/>
            <person name="Tomaru Y."/>
            <person name="Fukuda S."/>
            <person name="Kanamori-Katayama M."/>
            <person name="Suzuki M."/>
            <person name="Aoki J."/>
            <person name="Arakawa T."/>
            <person name="Iida J."/>
            <person name="Imamura K."/>
            <person name="Itoh M."/>
            <person name="Kato T."/>
            <person name="Kawaji H."/>
            <person name="Kawagashira N."/>
            <person name="Kawashima T."/>
            <person name="Kojima M."/>
            <person name="Kondo S."/>
            <person name="Konno H."/>
            <person name="Nakano K."/>
            <person name="Ninomiya N."/>
            <person name="Nishio T."/>
            <person name="Okada M."/>
            <person name="Plessy C."/>
            <person name="Shibata K."/>
            <person name="Shiraki T."/>
            <person name="Suzuki S."/>
            <person name="Tagami M."/>
            <person name="Waki K."/>
            <person name="Watahiki A."/>
            <person name="Okamura-Oho Y."/>
            <person name="Suzuki H."/>
            <person name="Kawai J."/>
            <person name="Hayashizaki Y."/>
        </authorList>
    </citation>
    <scope>NUCLEOTIDE SEQUENCE [LARGE SCALE MRNA]</scope>
    <source>
        <strain>C57BL/6J</strain>
        <tissue>Brain cortex</tissue>
        <tissue>Cerebellum</tissue>
        <tissue>Embryonic spinal cord</tissue>
    </source>
</reference>
<reference key="3">
    <citation type="journal article" date="2004" name="Genome Res.">
        <title>The status, quality, and expansion of the NIH full-length cDNA project: the Mammalian Gene Collection (MGC).</title>
        <authorList>
            <consortium name="The MGC Project Team"/>
        </authorList>
    </citation>
    <scope>NUCLEOTIDE SEQUENCE [LARGE SCALE MRNA]</scope>
    <source>
        <strain>FVB/N</strain>
        <tissue>Mammary tumor</tissue>
    </source>
</reference>
<reference key="4">
    <citation type="journal article" date="2010" name="Cell">
        <title>A tissue-specific atlas of mouse protein phosphorylation and expression.</title>
        <authorList>
            <person name="Huttlin E.L."/>
            <person name="Jedrychowski M.P."/>
            <person name="Elias J.E."/>
            <person name="Goswami T."/>
            <person name="Rad R."/>
            <person name="Beausoleil S.A."/>
            <person name="Villen J."/>
            <person name="Haas W."/>
            <person name="Sowa M.E."/>
            <person name="Gygi S.P."/>
        </authorList>
    </citation>
    <scope>PHOSPHORYLATION [LARGE SCALE ANALYSIS] AT SER-120</scope>
    <scope>IDENTIFICATION BY MASS SPECTROMETRY [LARGE SCALE ANALYSIS]</scope>
    <source>
        <tissue>Brain</tissue>
        <tissue>Brown adipose tissue</tissue>
        <tissue>Heart</tissue>
        <tissue>Kidney</tissue>
        <tissue>Liver</tissue>
        <tissue>Lung</tissue>
        <tissue>Pancreas</tissue>
        <tissue>Testis</tissue>
    </source>
</reference>
<accession>Q8K273</accession>
<accession>A7UH87</accession>
<proteinExistence type="evidence at protein level"/>
<organism>
    <name type="scientific">Mus musculus</name>
    <name type="common">Mouse</name>
    <dbReference type="NCBI Taxonomy" id="10090"/>
    <lineage>
        <taxon>Eukaryota</taxon>
        <taxon>Metazoa</taxon>
        <taxon>Chordata</taxon>
        <taxon>Craniata</taxon>
        <taxon>Vertebrata</taxon>
        <taxon>Euteleostomi</taxon>
        <taxon>Mammalia</taxon>
        <taxon>Eutheria</taxon>
        <taxon>Euarchontoglires</taxon>
        <taxon>Glires</taxon>
        <taxon>Rodentia</taxon>
        <taxon>Myomorpha</taxon>
        <taxon>Muroidea</taxon>
        <taxon>Muridae</taxon>
        <taxon>Murinae</taxon>
        <taxon>Mus</taxon>
        <taxon>Mus</taxon>
    </lineage>
</organism>
<gene>
    <name evidence="3 6" type="primary">Mmgt1</name>
    <name evidence="1" type="synonym">Emc5</name>
    <name evidence="6" type="synonym">Tmem32</name>
</gene>
<protein>
    <recommendedName>
        <fullName evidence="1">ER membrane protein complex subunit 5</fullName>
    </recommendedName>
    <alternativeName>
        <fullName evidence="3">Membrane magnesium transporter 1</fullName>
    </alternativeName>
    <alternativeName>
        <fullName evidence="6">Transmembrane protein 32</fullName>
    </alternativeName>
</protein>